<feature type="chain" id="PRO_0000280749" description="NAC-alpha domain-containing protein 1">
    <location>
        <begin position="1"/>
        <end position="1504"/>
    </location>
</feature>
<feature type="domain" description="NAC-A/B" evidence="3">
    <location>
        <begin position="1354"/>
        <end position="1419"/>
    </location>
</feature>
<feature type="region of interest" description="Disordered" evidence="4">
    <location>
        <begin position="127"/>
        <end position="150"/>
    </location>
</feature>
<feature type="region of interest" description="Disordered" evidence="4">
    <location>
        <begin position="208"/>
        <end position="261"/>
    </location>
</feature>
<feature type="region of interest" description="Disordered" evidence="4">
    <location>
        <begin position="315"/>
        <end position="356"/>
    </location>
</feature>
<feature type="region of interest" description="Disordered" evidence="4">
    <location>
        <begin position="396"/>
        <end position="436"/>
    </location>
</feature>
<feature type="region of interest" description="Disordered" evidence="4">
    <location>
        <begin position="460"/>
        <end position="525"/>
    </location>
</feature>
<feature type="region of interest" description="Disordered" evidence="4">
    <location>
        <begin position="539"/>
        <end position="565"/>
    </location>
</feature>
<feature type="region of interest" description="Disordered" evidence="4">
    <location>
        <begin position="701"/>
        <end position="812"/>
    </location>
</feature>
<feature type="region of interest" description="Disordered" evidence="4">
    <location>
        <begin position="834"/>
        <end position="1064"/>
    </location>
</feature>
<feature type="region of interest" description="Disordered" evidence="4">
    <location>
        <begin position="1099"/>
        <end position="1366"/>
    </location>
</feature>
<feature type="region of interest" description="Disordered" evidence="4">
    <location>
        <begin position="1430"/>
        <end position="1467"/>
    </location>
</feature>
<feature type="compositionally biased region" description="Low complexity" evidence="4">
    <location>
        <begin position="342"/>
        <end position="354"/>
    </location>
</feature>
<feature type="compositionally biased region" description="Acidic residues" evidence="4">
    <location>
        <begin position="398"/>
        <end position="407"/>
    </location>
</feature>
<feature type="compositionally biased region" description="Low complexity" evidence="4">
    <location>
        <begin position="408"/>
        <end position="422"/>
    </location>
</feature>
<feature type="compositionally biased region" description="Low complexity" evidence="4">
    <location>
        <begin position="462"/>
        <end position="475"/>
    </location>
</feature>
<feature type="compositionally biased region" description="Polar residues" evidence="4">
    <location>
        <begin position="510"/>
        <end position="525"/>
    </location>
</feature>
<feature type="compositionally biased region" description="Polar residues" evidence="4">
    <location>
        <begin position="775"/>
        <end position="792"/>
    </location>
</feature>
<feature type="compositionally biased region" description="Low complexity" evidence="4">
    <location>
        <begin position="930"/>
        <end position="939"/>
    </location>
</feature>
<feature type="compositionally biased region" description="Polar residues" evidence="4">
    <location>
        <begin position="958"/>
        <end position="968"/>
    </location>
</feature>
<feature type="compositionally biased region" description="Basic and acidic residues" evidence="4">
    <location>
        <begin position="989"/>
        <end position="1005"/>
    </location>
</feature>
<feature type="compositionally biased region" description="Polar residues" evidence="4">
    <location>
        <begin position="1016"/>
        <end position="1031"/>
    </location>
</feature>
<feature type="compositionally biased region" description="Pro residues" evidence="4">
    <location>
        <begin position="1159"/>
        <end position="1171"/>
    </location>
</feature>
<feature type="compositionally biased region" description="Polar residues" evidence="4">
    <location>
        <begin position="1213"/>
        <end position="1222"/>
    </location>
</feature>
<feature type="compositionally biased region" description="Acidic residues" evidence="4">
    <location>
        <begin position="1451"/>
        <end position="1464"/>
    </location>
</feature>
<feature type="modified residue" description="Phosphoserine" evidence="2">
    <location>
        <position position="998"/>
    </location>
</feature>
<feature type="modified residue" description="Phosphoserine" evidence="6">
    <location>
        <position position="1268"/>
    </location>
</feature>
<feature type="sequence conflict" description="In Ref. 3; BAD23961." evidence="5" ref="3">
    <original>C</original>
    <variation>R</variation>
    <location>
        <position position="520"/>
    </location>
</feature>
<feature type="sequence conflict" description="In Ref. 3; BAD23961." evidence="5" ref="3">
    <original>N</original>
    <variation>S</variation>
    <location>
        <position position="523"/>
    </location>
</feature>
<feature type="sequence conflict" description="In Ref. 3; BAD23961." evidence="5" ref="3">
    <original>P</original>
    <variation>S</variation>
    <location>
        <position position="548"/>
    </location>
</feature>
<feature type="sequence conflict" description="In Ref. 3; BAD23961." evidence="5" ref="3">
    <original>LVV</original>
    <variation>SVA</variation>
    <location>
        <begin position="575"/>
        <end position="577"/>
    </location>
</feature>
<feature type="sequence conflict" description="In Ref. 3; BAD23961." evidence="5" ref="3">
    <original>P</original>
    <variation>S</variation>
    <location>
        <position position="706"/>
    </location>
</feature>
<feature type="sequence conflict" description="In Ref. 3; BAD23961." evidence="5" ref="3">
    <original>P</original>
    <variation>L</variation>
    <location>
        <position position="819"/>
    </location>
</feature>
<feature type="sequence conflict" description="In Ref. 3; BAD23961." evidence="5" ref="3">
    <original>P</original>
    <variation>S</variation>
    <location>
        <position position="930"/>
    </location>
</feature>
<feature type="sequence conflict" description="In Ref. 3; BAD23961." evidence="5" ref="3">
    <original>A</original>
    <variation>T</variation>
    <location>
        <position position="1090"/>
    </location>
</feature>
<feature type="sequence conflict" description="In Ref. 3; BAD23961." evidence="5" ref="3">
    <original>L</original>
    <variation>LDP</variation>
    <location>
        <position position="1142"/>
    </location>
</feature>
<feature type="sequence conflict" description="In Ref. 3; BAD23961." evidence="5" ref="3">
    <original>E</original>
    <variation>V</variation>
    <location>
        <position position="1175"/>
    </location>
</feature>
<evidence type="ECO:0000250" key="1"/>
<evidence type="ECO:0000250" key="2">
    <source>
        <dbReference type="UniProtKB" id="O15069"/>
    </source>
</evidence>
<evidence type="ECO:0000255" key="3">
    <source>
        <dbReference type="PROSITE-ProRule" id="PRU00507"/>
    </source>
</evidence>
<evidence type="ECO:0000256" key="4">
    <source>
        <dbReference type="SAM" id="MobiDB-lite"/>
    </source>
</evidence>
<evidence type="ECO:0000305" key="5"/>
<evidence type="ECO:0007744" key="6">
    <source>
    </source>
</evidence>
<sequence>MSALPLALRSARRAGARSLGLIGGRGSADVIYAPPPPSRGAVAVLATPSALTDRGTERQGYRQAHVQAMPGEAAGAELPLPEAGGPGSRTDHSCDAAIATILKGDQLEPHGLTPGPSPLALTFLSSKPGARPQPEGASWDAGPSGAASAWVDPAEGSPSLVVLPEGLPLRPVPAEGPLPTTLEPRIVMGEETCQVIASPRAAWPVLRDREGGHPALHPPPELCSQGDPPVPSPPPDLESYFTPPSTPTKSTHALLPDHGPHRDAWDLEAELLDELLDSTPASPSGSYITADGDSWASSPSCSLSLLDPAEGLDFPSDWGLSPSGSVADDLEPHPAAPPEPPSSESSLSADSSSSWSQEGHFFDPNFLANDPMIPAALLPFRGSLIFQVEAVEVTPLPQEEEEDEEDVAATAAAAAPAAATPDGDLAGEGEDDSTSASFLQSLSDLSIIEGMDEAFAFRDDTSAASSDSDSASYAGADDDRLYSGEPHAQPSAQNTEQAYRSRATFPGIESTPQTSEQEICLTNSQESVAEIAEEILTLGLESEAMRTPPDQQAAPGPQVEETPTVTPWVGNKVDLVVEQVSKALPEPCQEGISTTLGCKPLTAEAIPDLQEGASPSLCPVLPEKKEEGQGLPSTLEYVAVALEGPWKAEGGVTIPQDPLMTLPPLLQSTVPTSGPESVAVVALEPQQNEGCVTVLPDVPVVLPPSPQSVDPSSGPEAMAVATYEFQRAKEGTPGLQDSPVAASPALQGPDPTSEPEPEVVVTSRSQQDEGIVTVPQESPTASSLTLQSSHPTSDQEREVAATLGPQQAEEGVTIPQVAPVASPSLLQGLESTSDLESVVVGTPESQQDEGIATATQDTPVMAPPPLRGTDSTSDPELIAPDTSQALQREAGHTPGTKPSVSEAHQELGVASGPRPVPKEGDAEPPPHSAPPASNQAQQNGSEPGYKSDSFGAPEESDSTLSTKTSEPTSCMGEKVAANMSAPKQGACLEAHDGVKTHSPQREALRSKNKRGRGTKSPGQGNGPKSATSQGAVETCRAHSAARSEVSQPQLRSNEDTSGPRLPVAVSVQARLGSCPGSPARATCTLSRVYAEETSRCAPPFQHLEPMLGLGSAEQPKVTPGILNLSPDNSAGDLLTTSQNRFLDPDPAPSTLDRASQSSPGPPDPCLCPPPQKASEEEEKPPASRGPMPRAGAQGAAAITTSGSTKPPGARQRVSLSPHSTLNPKVAPTDTKDLACIISSPCQVPPPSGTQNPSGPREFPALEQKDEDSLEEDAQRAPGSGQRWESHGESSSELDEYLAPPPDAQRTPGSGQRSESHGESSSELGEQDLSPQKSQCPAQGPAGSNEETIAKAKQSRSEKKARKAMSKLGLRQIQGVTRITIQKSKNILFVIAKPDVFKSPASDTYVVFGEAKIEDLSQQVHKAAAEKFKVPSEPSALVPELSPGPRVRPECEEQEEEDEEVEEAGLEPRDIELVMAQANVTRAKAVRALKDNHSDIVNAIMELTM</sequence>
<accession>Q5SWP3</accession>
<accession>Q6I6F5</accession>
<reference key="1">
    <citation type="journal article" date="2009" name="PLoS Biol.">
        <title>Lineage-specific biology revealed by a finished genome assembly of the mouse.</title>
        <authorList>
            <person name="Church D.M."/>
            <person name="Goodstadt L."/>
            <person name="Hillier L.W."/>
            <person name="Zody M.C."/>
            <person name="Goldstein S."/>
            <person name="She X."/>
            <person name="Bult C.J."/>
            <person name="Agarwala R."/>
            <person name="Cherry J.L."/>
            <person name="DiCuccio M."/>
            <person name="Hlavina W."/>
            <person name="Kapustin Y."/>
            <person name="Meric P."/>
            <person name="Maglott D."/>
            <person name="Birtle Z."/>
            <person name="Marques A.C."/>
            <person name="Graves T."/>
            <person name="Zhou S."/>
            <person name="Teague B."/>
            <person name="Potamousis K."/>
            <person name="Churas C."/>
            <person name="Place M."/>
            <person name="Herschleb J."/>
            <person name="Runnheim R."/>
            <person name="Forrest D."/>
            <person name="Amos-Landgraf J."/>
            <person name="Schwartz D.C."/>
            <person name="Cheng Z."/>
            <person name="Lindblad-Toh K."/>
            <person name="Eichler E.E."/>
            <person name="Ponting C.P."/>
        </authorList>
    </citation>
    <scope>NUCLEOTIDE SEQUENCE [LARGE SCALE GENOMIC DNA]</scope>
</reference>
<reference key="2">
    <citation type="journal article" date="2004" name="Genome Res.">
        <title>The status, quality, and expansion of the NIH full-length cDNA project: the Mammalian Gene Collection (MGC).</title>
        <authorList>
            <consortium name="The MGC Project Team"/>
        </authorList>
    </citation>
    <scope>NUCLEOTIDE SEQUENCE [LARGE SCALE MRNA]</scope>
    <source>
        <tissue>Fetal brain</tissue>
    </source>
</reference>
<reference key="3">
    <citation type="journal article" date="2003" name="DNA Res.">
        <title>Prediction of the coding sequences of mouse homologues of KIAA gene: III. The complete nucleotide sequences of 500 mouse KIAA-homologous cDNAs identified by screening of terminal sequences of cDNA clones randomly sampled from size-fractionated libraries.</title>
        <authorList>
            <person name="Okazaki N."/>
            <person name="Kikuno R."/>
            <person name="Ohara R."/>
            <person name="Inamoto S."/>
            <person name="Koseki H."/>
            <person name="Hiraoka S."/>
            <person name="Saga Y."/>
            <person name="Nagase T."/>
            <person name="Ohara O."/>
            <person name="Koga H."/>
        </authorList>
    </citation>
    <scope>NUCLEOTIDE SEQUENCE [LARGE SCALE MRNA] OF 62-1504</scope>
    <source>
        <tissue>Fetal brain</tissue>
    </source>
</reference>
<reference key="4">
    <citation type="journal article" date="2010" name="Cell">
        <title>A tissue-specific atlas of mouse protein phosphorylation and expression.</title>
        <authorList>
            <person name="Huttlin E.L."/>
            <person name="Jedrychowski M.P."/>
            <person name="Elias J.E."/>
            <person name="Goswami T."/>
            <person name="Rad R."/>
            <person name="Beausoleil S.A."/>
            <person name="Villen J."/>
            <person name="Haas W."/>
            <person name="Sowa M.E."/>
            <person name="Gygi S.P."/>
        </authorList>
    </citation>
    <scope>PHOSPHORYLATION [LARGE SCALE ANALYSIS] AT SER-1268</scope>
    <scope>IDENTIFICATION BY MASS SPECTROMETRY [LARGE SCALE ANALYSIS]</scope>
    <source>
        <tissue>Brain</tissue>
    </source>
</reference>
<protein>
    <recommendedName>
        <fullName>NAC-alpha domain-containing protein 1</fullName>
    </recommendedName>
</protein>
<organism>
    <name type="scientific">Mus musculus</name>
    <name type="common">Mouse</name>
    <dbReference type="NCBI Taxonomy" id="10090"/>
    <lineage>
        <taxon>Eukaryota</taxon>
        <taxon>Metazoa</taxon>
        <taxon>Chordata</taxon>
        <taxon>Craniata</taxon>
        <taxon>Vertebrata</taxon>
        <taxon>Euteleostomi</taxon>
        <taxon>Mammalia</taxon>
        <taxon>Eutheria</taxon>
        <taxon>Euarchontoglires</taxon>
        <taxon>Glires</taxon>
        <taxon>Rodentia</taxon>
        <taxon>Myomorpha</taxon>
        <taxon>Muroidea</taxon>
        <taxon>Muridae</taxon>
        <taxon>Murinae</taxon>
        <taxon>Mus</taxon>
        <taxon>Mus</taxon>
    </lineage>
</organism>
<proteinExistence type="evidence at protein level"/>
<keyword id="KW-0963">Cytoplasm</keyword>
<keyword id="KW-0539">Nucleus</keyword>
<keyword id="KW-0597">Phosphoprotein</keyword>
<keyword id="KW-0653">Protein transport</keyword>
<keyword id="KW-1185">Reference proteome</keyword>
<keyword id="KW-0813">Transport</keyword>
<gene>
    <name type="primary">Nacad</name>
    <name type="synonym">Kiaa0363</name>
</gene>
<dbReference type="EMBL" id="AL603787">
    <property type="status" value="NOT_ANNOTATED_CDS"/>
    <property type="molecule type" value="Genomic_DNA"/>
</dbReference>
<dbReference type="EMBL" id="BC072589">
    <property type="status" value="NOT_ANNOTATED_CDS"/>
    <property type="molecule type" value="mRNA"/>
</dbReference>
<dbReference type="EMBL" id="AB182283">
    <property type="protein sequence ID" value="BAD23961.1"/>
    <property type="molecule type" value="mRNA"/>
</dbReference>
<dbReference type="CCDS" id="CCDS36108.1"/>
<dbReference type="RefSeq" id="NP_001075121.1">
    <property type="nucleotide sequence ID" value="NM_001081652.1"/>
</dbReference>
<dbReference type="SMR" id="Q5SWP3"/>
<dbReference type="BioGRID" id="228718">
    <property type="interactions" value="3"/>
</dbReference>
<dbReference type="FunCoup" id="Q5SWP3">
    <property type="interactions" value="416"/>
</dbReference>
<dbReference type="IntAct" id="Q5SWP3">
    <property type="interactions" value="1"/>
</dbReference>
<dbReference type="MINT" id="Q5SWP3"/>
<dbReference type="STRING" id="10090.ENSMUSP00000049490"/>
<dbReference type="GlyGen" id="Q5SWP3">
    <property type="glycosylation" value="5 sites, 1 N-linked glycan (1 site), 1 O-linked glycan (1 site)"/>
</dbReference>
<dbReference type="iPTMnet" id="Q5SWP3"/>
<dbReference type="PhosphoSitePlus" id="Q5SWP3"/>
<dbReference type="PaxDb" id="10090-ENSMUSP00000049490"/>
<dbReference type="PeptideAtlas" id="Q5SWP3"/>
<dbReference type="ProteomicsDB" id="293615"/>
<dbReference type="Antibodypedia" id="56503">
    <property type="antibodies" value="73 antibodies from 21 providers"/>
</dbReference>
<dbReference type="Ensembl" id="ENSMUST00000045713.4">
    <property type="protein sequence ID" value="ENSMUSP00000049490.4"/>
    <property type="gene ID" value="ENSMUSG00000041073.11"/>
</dbReference>
<dbReference type="GeneID" id="192950"/>
<dbReference type="KEGG" id="mmu:192950"/>
<dbReference type="UCSC" id="uc007hyy.1">
    <property type="organism name" value="mouse"/>
</dbReference>
<dbReference type="AGR" id="MGI:3603030"/>
<dbReference type="CTD" id="23148"/>
<dbReference type="MGI" id="MGI:3603030">
    <property type="gene designation" value="Nacad"/>
</dbReference>
<dbReference type="VEuPathDB" id="HostDB:ENSMUSG00000041073"/>
<dbReference type="eggNOG" id="KOG2239">
    <property type="taxonomic scope" value="Eukaryota"/>
</dbReference>
<dbReference type="GeneTree" id="ENSGT00940000161501"/>
<dbReference type="HOGENOM" id="CLU_005021_0_0_1"/>
<dbReference type="InParanoid" id="Q5SWP3"/>
<dbReference type="OMA" id="CLCQDPQ"/>
<dbReference type="OrthoDB" id="3169036at2759"/>
<dbReference type="PhylomeDB" id="Q5SWP3"/>
<dbReference type="TreeFam" id="TF313348"/>
<dbReference type="BioGRID-ORCS" id="192950">
    <property type="hits" value="3 hits in 76 CRISPR screens"/>
</dbReference>
<dbReference type="PRO" id="PR:Q5SWP3"/>
<dbReference type="Proteomes" id="UP000000589">
    <property type="component" value="Chromosome 11"/>
</dbReference>
<dbReference type="RNAct" id="Q5SWP3">
    <property type="molecule type" value="protein"/>
</dbReference>
<dbReference type="Bgee" id="ENSMUSG00000041073">
    <property type="expression patterns" value="Expressed in cortical plate and 186 other cell types or tissues"/>
</dbReference>
<dbReference type="ExpressionAtlas" id="Q5SWP3">
    <property type="expression patterns" value="baseline and differential"/>
</dbReference>
<dbReference type="GO" id="GO:0005854">
    <property type="term" value="C:nascent polypeptide-associated complex"/>
    <property type="evidence" value="ECO:0007669"/>
    <property type="project" value="InterPro"/>
</dbReference>
<dbReference type="GO" id="GO:0005634">
    <property type="term" value="C:nucleus"/>
    <property type="evidence" value="ECO:0007669"/>
    <property type="project" value="UniProtKB-SubCell"/>
</dbReference>
<dbReference type="GO" id="GO:0015031">
    <property type="term" value="P:protein transport"/>
    <property type="evidence" value="ECO:0007669"/>
    <property type="project" value="UniProtKB-KW"/>
</dbReference>
<dbReference type="CDD" id="cd22054">
    <property type="entry name" value="NAC_NACA"/>
    <property type="match status" value="1"/>
</dbReference>
<dbReference type="CDD" id="cd14416">
    <property type="entry name" value="UBA_NACAD"/>
    <property type="match status" value="1"/>
</dbReference>
<dbReference type="FunFam" id="2.20.70.30:FF:000002">
    <property type="entry name" value="Nascent polypeptide-associated complex (NAC), alpha subunit"/>
    <property type="match status" value="1"/>
</dbReference>
<dbReference type="FunFam" id="1.10.8.10:FF:000006">
    <property type="entry name" value="Putative nascent polypeptide-associated complex subunit alpha"/>
    <property type="match status" value="1"/>
</dbReference>
<dbReference type="Gene3D" id="1.10.8.10">
    <property type="entry name" value="DNA helicase RuvA subunit, C-terminal domain"/>
    <property type="match status" value="1"/>
</dbReference>
<dbReference type="Gene3D" id="2.20.70.30">
    <property type="entry name" value="Nascent polypeptide-associated complex domain"/>
    <property type="match status" value="1"/>
</dbReference>
<dbReference type="InterPro" id="IPR016641">
    <property type="entry name" value="EGD2/NACA0like"/>
</dbReference>
<dbReference type="InterPro" id="IPR044034">
    <property type="entry name" value="NAC-like_UBA"/>
</dbReference>
<dbReference type="InterPro" id="IPR038187">
    <property type="entry name" value="NAC_A/B_dom_sf"/>
</dbReference>
<dbReference type="InterPro" id="IPR041907">
    <property type="entry name" value="NACAD_UBA"/>
</dbReference>
<dbReference type="InterPro" id="IPR002715">
    <property type="entry name" value="Nas_poly-pep-assoc_cplx_dom"/>
</dbReference>
<dbReference type="PANTHER" id="PTHR21713">
    <property type="entry name" value="NASCENT POLYPEPTIDE ASSOCIATED COMPLEX ALPHA SUBUNIT-RELATED"/>
    <property type="match status" value="1"/>
</dbReference>
<dbReference type="Pfam" id="PF01849">
    <property type="entry name" value="NAC"/>
    <property type="match status" value="1"/>
</dbReference>
<dbReference type="Pfam" id="PF19026">
    <property type="entry name" value="UBA_HYPK"/>
    <property type="match status" value="1"/>
</dbReference>
<dbReference type="SMART" id="SM01407">
    <property type="entry name" value="NAC"/>
    <property type="match status" value="1"/>
</dbReference>
<dbReference type="PROSITE" id="PS51151">
    <property type="entry name" value="NAC_AB"/>
    <property type="match status" value="1"/>
</dbReference>
<comment type="function">
    <text evidence="1">May prevent inappropriate targeting of non-secretory polypeptides to the endoplasmic reticulum (ER). May bind to nascent polypeptide chains as they emerge from the ribosome and block their interaction with the signal recognition particle (SRP), which normally targets nascent secretory peptides to the ER. May also reduce the inherent affinity of ribosomes for protein translocation sites in the ER membrane (M sites) (By similarity).</text>
</comment>
<comment type="subcellular location">
    <subcellularLocation>
        <location evidence="1">Cytoplasm</location>
    </subcellularLocation>
    <subcellularLocation>
        <location evidence="1">Nucleus</location>
    </subcellularLocation>
</comment>
<comment type="similarity">
    <text evidence="5">Belongs to the NAC-alpha family.</text>
</comment>
<name>NACAD_MOUSE</name>